<gene>
    <name evidence="1" type="primary">surA</name>
    <name type="ordered locus">Sde_0739</name>
</gene>
<keyword id="KW-0143">Chaperone</keyword>
<keyword id="KW-0413">Isomerase</keyword>
<keyword id="KW-0574">Periplasm</keyword>
<keyword id="KW-1185">Reference proteome</keyword>
<keyword id="KW-0677">Repeat</keyword>
<keyword id="KW-0697">Rotamase</keyword>
<keyword id="KW-0732">Signal</keyword>
<name>SURA_SACD2</name>
<accession>Q21MS8</accession>
<proteinExistence type="inferred from homology"/>
<organism>
    <name type="scientific">Saccharophagus degradans (strain 2-40 / ATCC 43961 / DSM 17024)</name>
    <dbReference type="NCBI Taxonomy" id="203122"/>
    <lineage>
        <taxon>Bacteria</taxon>
        <taxon>Pseudomonadati</taxon>
        <taxon>Pseudomonadota</taxon>
        <taxon>Gammaproteobacteria</taxon>
        <taxon>Cellvibrionales</taxon>
        <taxon>Cellvibrionaceae</taxon>
        <taxon>Saccharophagus</taxon>
    </lineage>
</organism>
<evidence type="ECO:0000255" key="1">
    <source>
        <dbReference type="HAMAP-Rule" id="MF_01183"/>
    </source>
</evidence>
<reference key="1">
    <citation type="journal article" date="2008" name="PLoS Genet.">
        <title>Complete genome sequence of the complex carbohydrate-degrading marine bacterium, Saccharophagus degradans strain 2-40 T.</title>
        <authorList>
            <person name="Weiner R.M."/>
            <person name="Taylor L.E. II"/>
            <person name="Henrissat B."/>
            <person name="Hauser L."/>
            <person name="Land M."/>
            <person name="Coutinho P.M."/>
            <person name="Rancurel C."/>
            <person name="Saunders E.H."/>
            <person name="Longmire A.G."/>
            <person name="Zhang H."/>
            <person name="Bayer E.A."/>
            <person name="Gilbert H.J."/>
            <person name="Larimer F."/>
            <person name="Zhulin I.B."/>
            <person name="Ekborg N.A."/>
            <person name="Lamed R."/>
            <person name="Richardson P.M."/>
            <person name="Borovok I."/>
            <person name="Hutcheson S."/>
        </authorList>
    </citation>
    <scope>NUCLEOTIDE SEQUENCE [LARGE SCALE GENOMIC DNA]</scope>
    <source>
        <strain>2-40 / ATCC 43961 / DSM 17024</strain>
    </source>
</reference>
<dbReference type="EC" id="5.2.1.8" evidence="1"/>
<dbReference type="EMBL" id="CP000282">
    <property type="protein sequence ID" value="ABD80001.1"/>
    <property type="molecule type" value="Genomic_DNA"/>
</dbReference>
<dbReference type="RefSeq" id="WP_011467222.1">
    <property type="nucleotide sequence ID" value="NC_007912.1"/>
</dbReference>
<dbReference type="SMR" id="Q21MS8"/>
<dbReference type="STRING" id="203122.Sde_0739"/>
<dbReference type="GeneID" id="98612424"/>
<dbReference type="KEGG" id="sde:Sde_0739"/>
<dbReference type="eggNOG" id="COG0760">
    <property type="taxonomic scope" value="Bacteria"/>
</dbReference>
<dbReference type="HOGENOM" id="CLU_034646_11_0_6"/>
<dbReference type="OrthoDB" id="14196at2"/>
<dbReference type="Proteomes" id="UP000001947">
    <property type="component" value="Chromosome"/>
</dbReference>
<dbReference type="GO" id="GO:0030288">
    <property type="term" value="C:outer membrane-bounded periplasmic space"/>
    <property type="evidence" value="ECO:0007669"/>
    <property type="project" value="InterPro"/>
</dbReference>
<dbReference type="GO" id="GO:0042277">
    <property type="term" value="F:peptide binding"/>
    <property type="evidence" value="ECO:0007669"/>
    <property type="project" value="InterPro"/>
</dbReference>
<dbReference type="GO" id="GO:0003755">
    <property type="term" value="F:peptidyl-prolyl cis-trans isomerase activity"/>
    <property type="evidence" value="ECO:0007669"/>
    <property type="project" value="UniProtKB-UniRule"/>
</dbReference>
<dbReference type="GO" id="GO:0051082">
    <property type="term" value="F:unfolded protein binding"/>
    <property type="evidence" value="ECO:0007669"/>
    <property type="project" value="UniProtKB-UniRule"/>
</dbReference>
<dbReference type="GO" id="GO:0043165">
    <property type="term" value="P:Gram-negative-bacterium-type cell outer membrane assembly"/>
    <property type="evidence" value="ECO:0007669"/>
    <property type="project" value="InterPro"/>
</dbReference>
<dbReference type="GO" id="GO:0006457">
    <property type="term" value="P:protein folding"/>
    <property type="evidence" value="ECO:0007669"/>
    <property type="project" value="UniProtKB-UniRule"/>
</dbReference>
<dbReference type="GO" id="GO:0050821">
    <property type="term" value="P:protein stabilization"/>
    <property type="evidence" value="ECO:0007669"/>
    <property type="project" value="InterPro"/>
</dbReference>
<dbReference type="Gene3D" id="3.10.50.40">
    <property type="match status" value="2"/>
</dbReference>
<dbReference type="Gene3D" id="1.10.4030.10">
    <property type="entry name" value="Porin chaperone SurA, peptide-binding domain"/>
    <property type="match status" value="1"/>
</dbReference>
<dbReference type="HAMAP" id="MF_01183">
    <property type="entry name" value="Chaperone_SurA"/>
    <property type="match status" value="1"/>
</dbReference>
<dbReference type="InterPro" id="IPR050280">
    <property type="entry name" value="OMP_Chaperone_SurA"/>
</dbReference>
<dbReference type="InterPro" id="IPR046357">
    <property type="entry name" value="PPIase_dom_sf"/>
</dbReference>
<dbReference type="InterPro" id="IPR000297">
    <property type="entry name" value="PPIase_PpiC"/>
</dbReference>
<dbReference type="InterPro" id="IPR023058">
    <property type="entry name" value="PPIase_PpiC_CS"/>
</dbReference>
<dbReference type="InterPro" id="IPR023034">
    <property type="entry name" value="PPIase_SurA"/>
</dbReference>
<dbReference type="InterPro" id="IPR015391">
    <property type="entry name" value="SurA_N"/>
</dbReference>
<dbReference type="InterPro" id="IPR027304">
    <property type="entry name" value="Trigger_fact/SurA_dom_sf"/>
</dbReference>
<dbReference type="PANTHER" id="PTHR47637">
    <property type="entry name" value="CHAPERONE SURA"/>
    <property type="match status" value="1"/>
</dbReference>
<dbReference type="PANTHER" id="PTHR47637:SF1">
    <property type="entry name" value="CHAPERONE SURA"/>
    <property type="match status" value="1"/>
</dbReference>
<dbReference type="Pfam" id="PF00639">
    <property type="entry name" value="Rotamase"/>
    <property type="match status" value="1"/>
</dbReference>
<dbReference type="Pfam" id="PF13616">
    <property type="entry name" value="Rotamase_3"/>
    <property type="match status" value="1"/>
</dbReference>
<dbReference type="Pfam" id="PF09312">
    <property type="entry name" value="SurA_N"/>
    <property type="match status" value="1"/>
</dbReference>
<dbReference type="SUPFAM" id="SSF54534">
    <property type="entry name" value="FKBP-like"/>
    <property type="match status" value="2"/>
</dbReference>
<dbReference type="SUPFAM" id="SSF109998">
    <property type="entry name" value="Triger factor/SurA peptide-binding domain-like"/>
    <property type="match status" value="1"/>
</dbReference>
<dbReference type="PROSITE" id="PS01096">
    <property type="entry name" value="PPIC_PPIASE_1"/>
    <property type="match status" value="2"/>
</dbReference>
<dbReference type="PROSITE" id="PS50198">
    <property type="entry name" value="PPIC_PPIASE_2"/>
    <property type="match status" value="2"/>
</dbReference>
<sequence length="430" mass="47920">MQIIKTTIATFTAIAFTGAASFTSAEVVPLDRVVAVVDNRAITQTELDSRVQDVQVRSQAAGMRLPEADILNKQIIDQLISETLQLEMADRYGVQVSDQEVNASIGNIIQNAQMTEQQFVQQLASEGVSINEFRASIRRQLTMRSITEGLVSRRIRISEQEVDNFLKSADAQFWVSPDYHLGHILVALPSSPSSEAIVEAEEKANALYEKLKAGANFAEVAIAESNGPSALQGGDLGWRKSAELPTLFAELLPSLNNGDVTKPTRSQAGFHIIKLYESRGGQKQIVNQTRARHILVKTSEILNDAKAEAKLKDIRQQILDGADFAELAKTHSEDIGSRMSGGDLGWATPGTFVPAFEKTMAETKEGEISQPFKSRFGWHIMKVEERREEDMTQEALRQKARNMIMSRRFEDETQIWLQELRDEAFIDIKI</sequence>
<comment type="function">
    <text evidence="1">Chaperone involved in the correct folding and assembly of outer membrane proteins. Recognizes specific patterns of aromatic residues and the orientation of their side chains, which are found more frequently in integral outer membrane proteins. May act in both early periplasmic and late outer membrane-associated steps of protein maturation.</text>
</comment>
<comment type="catalytic activity">
    <reaction evidence="1">
        <text>[protein]-peptidylproline (omega=180) = [protein]-peptidylproline (omega=0)</text>
        <dbReference type="Rhea" id="RHEA:16237"/>
        <dbReference type="Rhea" id="RHEA-COMP:10747"/>
        <dbReference type="Rhea" id="RHEA-COMP:10748"/>
        <dbReference type="ChEBI" id="CHEBI:83833"/>
        <dbReference type="ChEBI" id="CHEBI:83834"/>
        <dbReference type="EC" id="5.2.1.8"/>
    </reaction>
</comment>
<comment type="subcellular location">
    <subcellularLocation>
        <location evidence="1">Periplasm</location>
    </subcellularLocation>
    <text evidence="1">Is capable of associating with the outer membrane.</text>
</comment>
<comment type="domain">
    <text evidence="1">The PPIase activity resides only in the second parvulin domain. The N-terminal region and the C-terminal tail are necessary and sufficient for the chaperone activity of SurA. The PPIase activity is dispensable for SurA to function as a chaperone. The N-terminal region and the C-terminal tail are also required for porin recognition.</text>
</comment>
<protein>
    <recommendedName>
        <fullName evidence="1">Chaperone SurA</fullName>
    </recommendedName>
    <alternativeName>
        <fullName evidence="1">Peptidyl-prolyl cis-trans isomerase SurA</fullName>
        <shortName evidence="1">PPIase SurA</shortName>
        <ecNumber evidence="1">5.2.1.8</ecNumber>
    </alternativeName>
    <alternativeName>
        <fullName evidence="1">Rotamase SurA</fullName>
    </alternativeName>
</protein>
<feature type="signal peptide" evidence="1">
    <location>
        <begin position="1"/>
        <end position="25"/>
    </location>
</feature>
<feature type="chain" id="PRO_5000111109" description="Chaperone SurA">
    <location>
        <begin position="26"/>
        <end position="430"/>
    </location>
</feature>
<feature type="domain" description="PpiC 1" evidence="1">
    <location>
        <begin position="176"/>
        <end position="277"/>
    </location>
</feature>
<feature type="domain" description="PpiC 2" evidence="1">
    <location>
        <begin position="286"/>
        <end position="385"/>
    </location>
</feature>